<comment type="function">
    <text>Produces ATP from ADP in the presence of a sodium gradient across the membrane.</text>
</comment>
<comment type="subunit">
    <text>F-type ATPases have 2 components, CF(1) - the catalytic core - and CF(0) - the membrane proton channel. CF(1) has five subunits: alpha(3), beta(3), gamma(1), delta(1), epsilon(1). CF(0) has three main subunits: a, b and c.</text>
</comment>
<comment type="subcellular location">
    <subcellularLocation>
        <location evidence="1">Cell inner membrane</location>
        <topology evidence="1">Peripheral membrane protein</topology>
    </subcellularLocation>
</comment>
<comment type="miscellaneous">
    <text>The ATPase of P.modestum is of special interest because it uses sodium ions instead of protons as the physiological coupling ion.</text>
</comment>
<comment type="similarity">
    <text evidence="3">Belongs to the ATPase epsilon chain family.</text>
</comment>
<dbReference type="EMBL" id="X58461">
    <property type="protein sequence ID" value="CAA41375.1"/>
    <property type="molecule type" value="Genomic_DNA"/>
</dbReference>
<dbReference type="PIR" id="S29042">
    <property type="entry name" value="S29042"/>
</dbReference>
<dbReference type="SMR" id="P29709"/>
<dbReference type="TCDB" id="3.A.2.1.2">
    <property type="family name" value="the h+- or na+-translocating f-type, v-type and a-type atpase (f-atpase) superfamily"/>
</dbReference>
<dbReference type="GO" id="GO:0005886">
    <property type="term" value="C:plasma membrane"/>
    <property type="evidence" value="ECO:0007669"/>
    <property type="project" value="UniProtKB-SubCell"/>
</dbReference>
<dbReference type="GO" id="GO:0045259">
    <property type="term" value="C:proton-transporting ATP synthase complex"/>
    <property type="evidence" value="ECO:0007669"/>
    <property type="project" value="UniProtKB-KW"/>
</dbReference>
<dbReference type="GO" id="GO:0005524">
    <property type="term" value="F:ATP binding"/>
    <property type="evidence" value="ECO:0007669"/>
    <property type="project" value="UniProtKB-UniRule"/>
</dbReference>
<dbReference type="GO" id="GO:0046933">
    <property type="term" value="F:proton-transporting ATP synthase activity, rotational mechanism"/>
    <property type="evidence" value="ECO:0007669"/>
    <property type="project" value="UniProtKB-UniRule"/>
</dbReference>
<dbReference type="GO" id="GO:0006814">
    <property type="term" value="P:sodium ion transport"/>
    <property type="evidence" value="ECO:0007669"/>
    <property type="project" value="UniProtKB-KW"/>
</dbReference>
<dbReference type="CDD" id="cd12152">
    <property type="entry name" value="F1-ATPase_delta"/>
    <property type="match status" value="1"/>
</dbReference>
<dbReference type="Gene3D" id="2.60.15.10">
    <property type="entry name" value="F0F1 ATP synthase delta/epsilon subunit, N-terminal"/>
    <property type="match status" value="1"/>
</dbReference>
<dbReference type="HAMAP" id="MF_00530">
    <property type="entry name" value="ATP_synth_epsil_bac"/>
    <property type="match status" value="1"/>
</dbReference>
<dbReference type="InterPro" id="IPR001469">
    <property type="entry name" value="ATP_synth_F1_dsu/esu"/>
</dbReference>
<dbReference type="InterPro" id="IPR020546">
    <property type="entry name" value="ATP_synth_F1_dsu/esu_N"/>
</dbReference>
<dbReference type="InterPro" id="IPR020547">
    <property type="entry name" value="ATP_synth_F1_esu_C"/>
</dbReference>
<dbReference type="InterPro" id="IPR036771">
    <property type="entry name" value="ATPsynth_dsu/esu_N"/>
</dbReference>
<dbReference type="NCBIfam" id="TIGR01216">
    <property type="entry name" value="ATP_synt_epsi"/>
    <property type="match status" value="1"/>
</dbReference>
<dbReference type="PANTHER" id="PTHR13822">
    <property type="entry name" value="ATP SYNTHASE DELTA/EPSILON CHAIN"/>
    <property type="match status" value="1"/>
</dbReference>
<dbReference type="PANTHER" id="PTHR13822:SF10">
    <property type="entry name" value="ATP SYNTHASE EPSILON CHAIN, CHLOROPLASTIC"/>
    <property type="match status" value="1"/>
</dbReference>
<dbReference type="Pfam" id="PF00401">
    <property type="entry name" value="ATP-synt_DE"/>
    <property type="match status" value="1"/>
</dbReference>
<dbReference type="Pfam" id="PF02823">
    <property type="entry name" value="ATP-synt_DE_N"/>
    <property type="match status" value="1"/>
</dbReference>
<dbReference type="SUPFAM" id="SSF51344">
    <property type="entry name" value="Epsilon subunit of F1F0-ATP synthase N-terminal domain"/>
    <property type="match status" value="1"/>
</dbReference>
<name>ATPE_PROMO</name>
<sequence>MATFKLEVVTPLKKVLDRDAEMVIMRTIEGDMGVMADHAPFVAELAVGEMKIKSANGEEAYFVSGGFLEISKEKTMILADEAIDVKEIDVERAKREAEIAKETLVKLKEDKDIAVTQKSLQEALTKVRIAEQYMHHL</sequence>
<feature type="initiator methionine" description="Removed" evidence="2">
    <location>
        <position position="1"/>
    </location>
</feature>
<feature type="chain" id="PRO_0000188178" description="ATP synthase epsilon chain, sodium ion specific">
    <location>
        <begin position="2"/>
        <end position="137"/>
    </location>
</feature>
<keyword id="KW-0066">ATP synthesis</keyword>
<keyword id="KW-0997">Cell inner membrane</keyword>
<keyword id="KW-1003">Cell membrane</keyword>
<keyword id="KW-0139">CF(1)</keyword>
<keyword id="KW-0903">Direct protein sequencing</keyword>
<keyword id="KW-0406">Ion transport</keyword>
<keyword id="KW-0472">Membrane</keyword>
<keyword id="KW-0915">Sodium</keyword>
<keyword id="KW-0739">Sodium transport</keyword>
<keyword id="KW-0813">Transport</keyword>
<proteinExistence type="evidence at protein level"/>
<protein>
    <recommendedName>
        <fullName>ATP synthase epsilon chain, sodium ion specific</fullName>
    </recommendedName>
    <alternativeName>
        <fullName>F-ATPase epsilon subunit, sodium ion specific</fullName>
    </alternativeName>
    <alternativeName>
        <fullName>Na(+)-translocating ATPase subunit epsilon</fullName>
    </alternativeName>
</protein>
<reference key="1">
    <citation type="journal article" date="1992" name="FEMS Microbiol. Lett.">
        <title>Characterization of the genes coding for the F1F0 subunits of the sodium dependent ATPase of Propionigenium modestum.</title>
        <authorList>
            <person name="Krumholz L.R."/>
            <person name="Esser U."/>
            <person name="Simoni R.D."/>
        </authorList>
    </citation>
    <scope>NUCLEOTIDE SEQUENCE [GENOMIC DNA]</scope>
    <source>
        <strain>DSM 2376 / Gra Succ2</strain>
    </source>
</reference>
<reference key="2">
    <citation type="journal article" date="1993" name="FEBS Lett.">
        <title>N-terminal amino acid sequences of the subunits of the Na(+)-translocating F1F0 ATPase from Propionigenium modestum.</title>
        <authorList>
            <person name="Gerike U."/>
            <person name="Dimroth P."/>
        </authorList>
    </citation>
    <scope>PROTEIN SEQUENCE OF 2-8</scope>
</reference>
<organism>
    <name type="scientific">Propionigenium modestum</name>
    <dbReference type="NCBI Taxonomy" id="2333"/>
    <lineage>
        <taxon>Bacteria</taxon>
        <taxon>Fusobacteriati</taxon>
        <taxon>Fusobacteriota</taxon>
        <taxon>Fusobacteriia</taxon>
        <taxon>Fusobacteriales</taxon>
        <taxon>Fusobacteriaceae</taxon>
        <taxon>Propionigenium</taxon>
    </lineage>
</organism>
<accession>P29709</accession>
<gene>
    <name type="primary">atpC</name>
    <name type="synonym">uncC</name>
</gene>
<evidence type="ECO:0000250" key="1"/>
<evidence type="ECO:0000269" key="2">
    <source>
    </source>
</evidence>
<evidence type="ECO:0000305" key="3"/>